<keyword id="KW-0046">Antibiotic resistance</keyword>
<keyword id="KW-0997">Cell inner membrane</keyword>
<keyword id="KW-1003">Cell membrane</keyword>
<keyword id="KW-0133">Cell shape</keyword>
<keyword id="KW-0961">Cell wall biogenesis/degradation</keyword>
<keyword id="KW-0378">Hydrolase</keyword>
<keyword id="KW-0472">Membrane</keyword>
<keyword id="KW-0573">Peptidoglycan synthesis</keyword>
<keyword id="KW-1185">Reference proteome</keyword>
<keyword id="KW-0812">Transmembrane</keyword>
<keyword id="KW-1133">Transmembrane helix</keyword>
<sequence length="273" mass="30404">MDWLILLKALLLGIVEGLTEFLPISSTGHLILAGDLLNFNDDKAKVFTVAIQLGAILAVCWEYRERLVNIIRNLGTRQANRFVINLFIAFLPAAILGLLFIKTIKHYLFHPMPVAIALVTGGILILWAERREHRIEAETVDDMSWKQALQVGCAQCLALIPGTSRSGATIIGGLLFGLSRKAAAEFSFFLAIPVMFAATFYDVYKHREFLYIDDLGMFATGSVAAFISALIAIRGFIRYISHHDFTLFAWYRIGFGLIVLLTAYSGLVDWSVD</sequence>
<protein>
    <recommendedName>
        <fullName evidence="1">Undecaprenyl-diphosphatase</fullName>
        <ecNumber evidence="1">3.6.1.27</ecNumber>
    </recommendedName>
    <alternativeName>
        <fullName evidence="1">Bacitracin resistance protein</fullName>
    </alternativeName>
    <alternativeName>
        <fullName evidence="1">Undecaprenyl pyrophosphate phosphatase</fullName>
    </alternativeName>
</protein>
<reference key="1">
    <citation type="journal article" date="2003" name="J. Bacteriol.">
        <title>Complete genome sequence of the ammonia-oxidizing bacterium and obligate chemolithoautotroph Nitrosomonas europaea.</title>
        <authorList>
            <person name="Chain P."/>
            <person name="Lamerdin J.E."/>
            <person name="Larimer F.W."/>
            <person name="Regala W."/>
            <person name="Lao V."/>
            <person name="Land M.L."/>
            <person name="Hauser L."/>
            <person name="Hooper A.B."/>
            <person name="Klotz M.G."/>
            <person name="Norton J."/>
            <person name="Sayavedra-Soto L.A."/>
            <person name="Arciero D.M."/>
            <person name="Hommes N.G."/>
            <person name="Whittaker M.M."/>
            <person name="Arp D.J."/>
        </authorList>
    </citation>
    <scope>NUCLEOTIDE SEQUENCE [LARGE SCALE GENOMIC DNA]</scope>
    <source>
        <strain>ATCC 19718 / CIP 103999 / KCTC 2705 / NBRC 14298</strain>
    </source>
</reference>
<feature type="chain" id="PRO_0000151170" description="Undecaprenyl-diphosphatase">
    <location>
        <begin position="1"/>
        <end position="273"/>
    </location>
</feature>
<feature type="transmembrane region" description="Helical" evidence="1">
    <location>
        <begin position="4"/>
        <end position="24"/>
    </location>
</feature>
<feature type="transmembrane region" description="Helical" evidence="1">
    <location>
        <begin position="43"/>
        <end position="63"/>
    </location>
</feature>
<feature type="transmembrane region" description="Helical" evidence="1">
    <location>
        <begin position="82"/>
        <end position="102"/>
    </location>
</feature>
<feature type="transmembrane region" description="Helical" evidence="1">
    <location>
        <begin position="108"/>
        <end position="128"/>
    </location>
</feature>
<feature type="transmembrane region" description="Helical" evidence="1">
    <location>
        <begin position="183"/>
        <end position="203"/>
    </location>
</feature>
<feature type="transmembrane region" description="Helical" evidence="1">
    <location>
        <begin position="217"/>
        <end position="237"/>
    </location>
</feature>
<feature type="transmembrane region" description="Helical" evidence="1">
    <location>
        <begin position="248"/>
        <end position="268"/>
    </location>
</feature>
<organism>
    <name type="scientific">Nitrosomonas europaea (strain ATCC 19718 / CIP 103999 / KCTC 2705 / NBRC 14298)</name>
    <dbReference type="NCBI Taxonomy" id="228410"/>
    <lineage>
        <taxon>Bacteria</taxon>
        <taxon>Pseudomonadati</taxon>
        <taxon>Pseudomonadota</taxon>
        <taxon>Betaproteobacteria</taxon>
        <taxon>Nitrosomonadales</taxon>
        <taxon>Nitrosomonadaceae</taxon>
        <taxon>Nitrosomonas</taxon>
    </lineage>
</organism>
<name>UPPP_NITEU</name>
<evidence type="ECO:0000255" key="1">
    <source>
        <dbReference type="HAMAP-Rule" id="MF_01006"/>
    </source>
</evidence>
<comment type="function">
    <text evidence="1">Catalyzes the dephosphorylation of undecaprenyl diphosphate (UPP). Confers resistance to bacitracin.</text>
</comment>
<comment type="catalytic activity">
    <reaction evidence="1">
        <text>di-trans,octa-cis-undecaprenyl diphosphate + H2O = di-trans,octa-cis-undecaprenyl phosphate + phosphate + H(+)</text>
        <dbReference type="Rhea" id="RHEA:28094"/>
        <dbReference type="ChEBI" id="CHEBI:15377"/>
        <dbReference type="ChEBI" id="CHEBI:15378"/>
        <dbReference type="ChEBI" id="CHEBI:43474"/>
        <dbReference type="ChEBI" id="CHEBI:58405"/>
        <dbReference type="ChEBI" id="CHEBI:60392"/>
        <dbReference type="EC" id="3.6.1.27"/>
    </reaction>
</comment>
<comment type="subcellular location">
    <subcellularLocation>
        <location evidence="1">Cell inner membrane</location>
        <topology evidence="1">Multi-pass membrane protein</topology>
    </subcellularLocation>
</comment>
<comment type="miscellaneous">
    <text>Bacitracin is thought to be involved in the inhibition of peptidoglycan synthesis by sequestering undecaprenyl diphosphate, thereby reducing the pool of lipid carrier available.</text>
</comment>
<comment type="similarity">
    <text evidence="1">Belongs to the UppP family.</text>
</comment>
<gene>
    <name evidence="1" type="primary">uppP</name>
    <name type="synonym">bacA</name>
    <name type="synonym">upk</name>
    <name type="ordered locus">NE0039</name>
</gene>
<accession>Q82Y49</accession>
<proteinExistence type="inferred from homology"/>
<dbReference type="EC" id="3.6.1.27" evidence="1"/>
<dbReference type="EMBL" id="AL954747">
    <property type="protein sequence ID" value="CAD83950.1"/>
    <property type="molecule type" value="Genomic_DNA"/>
</dbReference>
<dbReference type="RefSeq" id="WP_011110691.1">
    <property type="nucleotide sequence ID" value="NC_004757.1"/>
</dbReference>
<dbReference type="SMR" id="Q82Y49"/>
<dbReference type="STRING" id="228410.NE0039"/>
<dbReference type="GeneID" id="87103247"/>
<dbReference type="KEGG" id="neu:NE0039"/>
<dbReference type="eggNOG" id="COG1968">
    <property type="taxonomic scope" value="Bacteria"/>
</dbReference>
<dbReference type="HOGENOM" id="CLU_060296_2_0_4"/>
<dbReference type="OrthoDB" id="9808289at2"/>
<dbReference type="PhylomeDB" id="Q82Y49"/>
<dbReference type="Proteomes" id="UP000001416">
    <property type="component" value="Chromosome"/>
</dbReference>
<dbReference type="GO" id="GO:0005886">
    <property type="term" value="C:plasma membrane"/>
    <property type="evidence" value="ECO:0007669"/>
    <property type="project" value="UniProtKB-SubCell"/>
</dbReference>
<dbReference type="GO" id="GO:0050380">
    <property type="term" value="F:undecaprenyl-diphosphatase activity"/>
    <property type="evidence" value="ECO:0007669"/>
    <property type="project" value="UniProtKB-UniRule"/>
</dbReference>
<dbReference type="GO" id="GO:0071555">
    <property type="term" value="P:cell wall organization"/>
    <property type="evidence" value="ECO:0007669"/>
    <property type="project" value="UniProtKB-KW"/>
</dbReference>
<dbReference type="GO" id="GO:0009252">
    <property type="term" value="P:peptidoglycan biosynthetic process"/>
    <property type="evidence" value="ECO:0007669"/>
    <property type="project" value="UniProtKB-KW"/>
</dbReference>
<dbReference type="GO" id="GO:0008360">
    <property type="term" value="P:regulation of cell shape"/>
    <property type="evidence" value="ECO:0007669"/>
    <property type="project" value="UniProtKB-KW"/>
</dbReference>
<dbReference type="GO" id="GO:0046677">
    <property type="term" value="P:response to antibiotic"/>
    <property type="evidence" value="ECO:0007669"/>
    <property type="project" value="UniProtKB-UniRule"/>
</dbReference>
<dbReference type="HAMAP" id="MF_01006">
    <property type="entry name" value="Undec_diphosphatase"/>
    <property type="match status" value="1"/>
</dbReference>
<dbReference type="InterPro" id="IPR003824">
    <property type="entry name" value="UppP"/>
</dbReference>
<dbReference type="NCBIfam" id="NF001389">
    <property type="entry name" value="PRK00281.1-2"/>
    <property type="match status" value="1"/>
</dbReference>
<dbReference type="NCBIfam" id="NF001390">
    <property type="entry name" value="PRK00281.1-4"/>
    <property type="match status" value="1"/>
</dbReference>
<dbReference type="NCBIfam" id="TIGR00753">
    <property type="entry name" value="undec_PP_bacA"/>
    <property type="match status" value="1"/>
</dbReference>
<dbReference type="PANTHER" id="PTHR30622">
    <property type="entry name" value="UNDECAPRENYL-DIPHOSPHATASE"/>
    <property type="match status" value="1"/>
</dbReference>
<dbReference type="PANTHER" id="PTHR30622:SF3">
    <property type="entry name" value="UNDECAPRENYL-DIPHOSPHATASE"/>
    <property type="match status" value="1"/>
</dbReference>
<dbReference type="Pfam" id="PF02673">
    <property type="entry name" value="BacA"/>
    <property type="match status" value="1"/>
</dbReference>